<dbReference type="EMBL" id="CP000886">
    <property type="protein sequence ID" value="ABX68448.1"/>
    <property type="molecule type" value="Genomic_DNA"/>
</dbReference>
<dbReference type="RefSeq" id="WP_001195023.1">
    <property type="nucleotide sequence ID" value="NC_010102.1"/>
</dbReference>
<dbReference type="SMR" id="A9MW89"/>
<dbReference type="KEGG" id="spq:SPAB_03086"/>
<dbReference type="PATRIC" id="fig|1016998.12.peg.2912"/>
<dbReference type="HOGENOM" id="CLU_060739_1_2_6"/>
<dbReference type="BioCyc" id="SENT1016998:SPAB_RS12590-MONOMER"/>
<dbReference type="Proteomes" id="UP000008556">
    <property type="component" value="Chromosome"/>
</dbReference>
<dbReference type="GO" id="GO:0003677">
    <property type="term" value="F:DNA binding"/>
    <property type="evidence" value="ECO:0007669"/>
    <property type="project" value="UniProtKB-UniRule"/>
</dbReference>
<dbReference type="GO" id="GO:0008270">
    <property type="term" value="F:zinc ion binding"/>
    <property type="evidence" value="ECO:0007669"/>
    <property type="project" value="UniProtKB-KW"/>
</dbReference>
<dbReference type="GO" id="GO:0006310">
    <property type="term" value="P:DNA recombination"/>
    <property type="evidence" value="ECO:0007669"/>
    <property type="project" value="UniProtKB-UniRule"/>
</dbReference>
<dbReference type="GO" id="GO:0006281">
    <property type="term" value="P:DNA repair"/>
    <property type="evidence" value="ECO:0007669"/>
    <property type="project" value="UniProtKB-UniRule"/>
</dbReference>
<dbReference type="CDD" id="cd01025">
    <property type="entry name" value="TOPRIM_recR"/>
    <property type="match status" value="1"/>
</dbReference>
<dbReference type="FunFam" id="1.10.8.420:FF:000001">
    <property type="entry name" value="Recombination protein RecR"/>
    <property type="match status" value="1"/>
</dbReference>
<dbReference type="FunFam" id="3.40.1360.10:FF:000001">
    <property type="entry name" value="Recombination protein RecR"/>
    <property type="match status" value="1"/>
</dbReference>
<dbReference type="Gene3D" id="3.40.1360.10">
    <property type="match status" value="1"/>
</dbReference>
<dbReference type="Gene3D" id="6.10.250.240">
    <property type="match status" value="1"/>
</dbReference>
<dbReference type="Gene3D" id="1.10.8.420">
    <property type="entry name" value="RecR Domain 1"/>
    <property type="match status" value="1"/>
</dbReference>
<dbReference type="HAMAP" id="MF_00017">
    <property type="entry name" value="RecR"/>
    <property type="match status" value="1"/>
</dbReference>
<dbReference type="InterPro" id="IPR000093">
    <property type="entry name" value="DNA_Rcmb_RecR"/>
</dbReference>
<dbReference type="InterPro" id="IPR023627">
    <property type="entry name" value="Rcmb_RecR"/>
</dbReference>
<dbReference type="InterPro" id="IPR015967">
    <property type="entry name" value="Rcmb_RecR_Znf"/>
</dbReference>
<dbReference type="InterPro" id="IPR006171">
    <property type="entry name" value="TOPRIM_dom"/>
</dbReference>
<dbReference type="InterPro" id="IPR034137">
    <property type="entry name" value="TOPRIM_RecR"/>
</dbReference>
<dbReference type="NCBIfam" id="TIGR00615">
    <property type="entry name" value="recR"/>
    <property type="match status" value="1"/>
</dbReference>
<dbReference type="PANTHER" id="PTHR30446">
    <property type="entry name" value="RECOMBINATION PROTEIN RECR"/>
    <property type="match status" value="1"/>
</dbReference>
<dbReference type="PANTHER" id="PTHR30446:SF0">
    <property type="entry name" value="RECOMBINATION PROTEIN RECR"/>
    <property type="match status" value="1"/>
</dbReference>
<dbReference type="Pfam" id="PF21175">
    <property type="entry name" value="RecR_C"/>
    <property type="match status" value="1"/>
</dbReference>
<dbReference type="Pfam" id="PF21176">
    <property type="entry name" value="RecR_HhH"/>
    <property type="match status" value="1"/>
</dbReference>
<dbReference type="Pfam" id="PF02132">
    <property type="entry name" value="RecR_ZnF"/>
    <property type="match status" value="1"/>
</dbReference>
<dbReference type="Pfam" id="PF13662">
    <property type="entry name" value="Toprim_4"/>
    <property type="match status" value="1"/>
</dbReference>
<dbReference type="SMART" id="SM00493">
    <property type="entry name" value="TOPRIM"/>
    <property type="match status" value="1"/>
</dbReference>
<dbReference type="SUPFAM" id="SSF111304">
    <property type="entry name" value="Recombination protein RecR"/>
    <property type="match status" value="1"/>
</dbReference>
<dbReference type="PROSITE" id="PS01300">
    <property type="entry name" value="RECR"/>
    <property type="match status" value="1"/>
</dbReference>
<dbReference type="PROSITE" id="PS50880">
    <property type="entry name" value="TOPRIM"/>
    <property type="match status" value="1"/>
</dbReference>
<accession>A9MW89</accession>
<organism>
    <name type="scientific">Salmonella paratyphi B (strain ATCC BAA-1250 / SPB7)</name>
    <dbReference type="NCBI Taxonomy" id="1016998"/>
    <lineage>
        <taxon>Bacteria</taxon>
        <taxon>Pseudomonadati</taxon>
        <taxon>Pseudomonadota</taxon>
        <taxon>Gammaproteobacteria</taxon>
        <taxon>Enterobacterales</taxon>
        <taxon>Enterobacteriaceae</taxon>
        <taxon>Salmonella</taxon>
    </lineage>
</organism>
<comment type="function">
    <text evidence="1">May play a role in DNA repair. It seems to be involved in an RecBC-independent recombinational process of DNA repair. It may act with RecF and RecO.</text>
</comment>
<comment type="similarity">
    <text evidence="1">Belongs to the RecR family.</text>
</comment>
<name>RECR_SALPB</name>
<keyword id="KW-0227">DNA damage</keyword>
<keyword id="KW-0233">DNA recombination</keyword>
<keyword id="KW-0234">DNA repair</keyword>
<keyword id="KW-0479">Metal-binding</keyword>
<keyword id="KW-0862">Zinc</keyword>
<keyword id="KW-0863">Zinc-finger</keyword>
<protein>
    <recommendedName>
        <fullName evidence="1">Recombination protein RecR</fullName>
    </recommendedName>
</protein>
<evidence type="ECO:0000255" key="1">
    <source>
        <dbReference type="HAMAP-Rule" id="MF_00017"/>
    </source>
</evidence>
<reference key="1">
    <citation type="submission" date="2007-11" db="EMBL/GenBank/DDBJ databases">
        <authorList>
            <consortium name="The Salmonella enterica serovar Paratyphi B Genome Sequencing Project"/>
            <person name="McClelland M."/>
            <person name="Sanderson E.K."/>
            <person name="Porwollik S."/>
            <person name="Spieth J."/>
            <person name="Clifton W.S."/>
            <person name="Fulton R."/>
            <person name="Cordes M."/>
            <person name="Wollam A."/>
            <person name="Shah N."/>
            <person name="Pepin K."/>
            <person name="Bhonagiri V."/>
            <person name="Nash W."/>
            <person name="Johnson M."/>
            <person name="Thiruvilangam P."/>
            <person name="Wilson R."/>
        </authorList>
    </citation>
    <scope>NUCLEOTIDE SEQUENCE [LARGE SCALE GENOMIC DNA]</scope>
    <source>
        <strain>ATCC BAA-1250 / SPB7</strain>
    </source>
</reference>
<proteinExistence type="inferred from homology"/>
<sequence length="201" mass="21715">MQTSPLLTQLMEALRCLPGVGPKSAQRMAFTLLQRDRSGGMRLAQALTRAMSEIGHCADCRTFTEQDVCNICSNPRRQENGQICVVESPADIYAIEQTGQFSGRYFVLMGHLSPLDGIGPDDIGLDRLEQRLASEKISELILATNPTVEGEATANYIAELCAEAGVEASRIAHGVPVGGELEMVDGTTLSHSLAGRHKIIF</sequence>
<gene>
    <name evidence="1" type="primary">recR</name>
    <name type="ordered locus">SPAB_03086</name>
</gene>
<feature type="chain" id="PRO_1000074130" description="Recombination protein RecR">
    <location>
        <begin position="1"/>
        <end position="201"/>
    </location>
</feature>
<feature type="domain" description="Toprim" evidence="1">
    <location>
        <begin position="81"/>
        <end position="176"/>
    </location>
</feature>
<feature type="zinc finger region" description="C4-type" evidence="1">
    <location>
        <begin position="57"/>
        <end position="72"/>
    </location>
</feature>